<proteinExistence type="evidence at transcript level"/>
<protein>
    <recommendedName>
        <fullName>Zinc finger CCCH-type with G patch domain-containing protein</fullName>
    </recommendedName>
</protein>
<evidence type="ECO:0000250" key="1"/>
<evidence type="ECO:0000250" key="2">
    <source>
        <dbReference type="UniProtKB" id="Q8N5A5"/>
    </source>
</evidence>
<evidence type="ECO:0000250" key="3">
    <source>
        <dbReference type="UniProtKB" id="Q8VDM1"/>
    </source>
</evidence>
<evidence type="ECO:0000255" key="4">
    <source>
        <dbReference type="PROSITE-ProRule" id="PRU00092"/>
    </source>
</evidence>
<evidence type="ECO:0000255" key="5">
    <source>
        <dbReference type="PROSITE-ProRule" id="PRU00723"/>
    </source>
</evidence>
<evidence type="ECO:0000256" key="6">
    <source>
        <dbReference type="SAM" id="MobiDB-lite"/>
    </source>
</evidence>
<accession>C5IJB0</accession>
<sequence>MDEESLQTALRTYDAQLQQVELALGAGLDPSELADLRQLQGDLKELIELTEASLVSIRKSKLLAALDGERPVQEDAEPLAFQNAIVETAEVPVAPGAELETVPSRETGPGPTEPGQEEDDGEDEEGGAALSGRKVNAPYYSAWGTLEYHNAMVVGTEEADDGSPGVRVLYLYPTHKSLKPCPFFLEGKCRFQENCRFSHGQVVSVDELRPFQDPDLSSLQAGSACLAKRQDGLWYPARITDVDSGYYTVKFDSLLLKEAVVEGDSILPPLRTDPAGSSDSDGSDADDPSYARVVEPGAANPGTCSSAFAGWEVHTRGIGSRLLAKMGYEFGKGLGRRADGRVEPVHAVVLPRGKSLDQCAEILQKRTRAGQAGVSKPPKCRSRGSGPGGRPPPRSVFDFLNEKLKGGAPGAPEVGAAPPGRSGKEVYHASRSTKRALSLRLLQTEEKIEQTQRAIRGIQEALARNAGRHSVTTTQLQEKLAGAQRQLGQLRAQEAGLQREQRKADTHKKMTEF</sequence>
<keyword id="KW-0007">Acetylation</keyword>
<keyword id="KW-0238">DNA-binding</keyword>
<keyword id="KW-0479">Metal-binding</keyword>
<keyword id="KW-0539">Nucleus</keyword>
<keyword id="KW-0597">Phosphoprotein</keyword>
<keyword id="KW-1185">Reference proteome</keyword>
<keyword id="KW-0678">Repressor</keyword>
<keyword id="KW-0804">Transcription</keyword>
<keyword id="KW-0805">Transcription regulation</keyword>
<keyword id="KW-0862">Zinc</keyword>
<keyword id="KW-0863">Zinc-finger</keyword>
<gene>
    <name type="primary">ZGPAT</name>
</gene>
<name>ZGPAT_SHEEP</name>
<dbReference type="EMBL" id="FJ943995">
    <property type="protein sequence ID" value="ACR46650.1"/>
    <property type="molecule type" value="mRNA"/>
</dbReference>
<dbReference type="RefSeq" id="NP_001155206.1">
    <property type="nucleotide sequence ID" value="NM_001161734.1"/>
</dbReference>
<dbReference type="SMR" id="C5IJB0"/>
<dbReference type="STRING" id="9940.ENSOARP00000010858"/>
<dbReference type="PaxDb" id="9940-ENSOARP00000010858"/>
<dbReference type="Ensembl" id="ENSOART00180049761">
    <property type="protein sequence ID" value="ENSOARP00180025412"/>
    <property type="gene ID" value="ENSOARG00180030078"/>
</dbReference>
<dbReference type="Ensembl" id="ENSOART00185041601">
    <property type="protein sequence ID" value="ENSOARP00185020592"/>
    <property type="gene ID" value="ENSOARG00185025270"/>
</dbReference>
<dbReference type="Ensembl" id="ENSOART00215059581">
    <property type="protein sequence ID" value="ENSOARP00215031613"/>
    <property type="gene ID" value="ENSOARG00215035494"/>
</dbReference>
<dbReference type="Ensembl" id="ENSOART00220064171">
    <property type="protein sequence ID" value="ENSOARP00220034317"/>
    <property type="gene ID" value="ENSOARG00220038823"/>
</dbReference>
<dbReference type="Ensembl" id="ENSOART00225091093">
    <property type="protein sequence ID" value="ENSOARP00225048463"/>
    <property type="gene ID" value="ENSOARG00225054551"/>
</dbReference>
<dbReference type="GeneID" id="100302028"/>
<dbReference type="KEGG" id="oas:100302028"/>
<dbReference type="CTD" id="84619"/>
<dbReference type="eggNOG" id="KOG2185">
    <property type="taxonomic scope" value="Eukaryota"/>
</dbReference>
<dbReference type="OrthoDB" id="4822at2759"/>
<dbReference type="Proteomes" id="UP000002356">
    <property type="component" value="Unplaced"/>
</dbReference>
<dbReference type="GO" id="GO:0005654">
    <property type="term" value="C:nucleoplasm"/>
    <property type="evidence" value="ECO:0007669"/>
    <property type="project" value="Ensembl"/>
</dbReference>
<dbReference type="GO" id="GO:0005634">
    <property type="term" value="C:nucleus"/>
    <property type="evidence" value="ECO:0000250"/>
    <property type="project" value="UniProtKB"/>
</dbReference>
<dbReference type="GO" id="GO:0005886">
    <property type="term" value="C:plasma membrane"/>
    <property type="evidence" value="ECO:0007669"/>
    <property type="project" value="Ensembl"/>
</dbReference>
<dbReference type="GO" id="GO:0003700">
    <property type="term" value="F:DNA-binding transcription factor activity"/>
    <property type="evidence" value="ECO:0000250"/>
    <property type="project" value="UniProtKB"/>
</dbReference>
<dbReference type="GO" id="GO:0001227">
    <property type="term" value="F:DNA-binding transcription repressor activity, RNA polymerase II-specific"/>
    <property type="evidence" value="ECO:0007669"/>
    <property type="project" value="Ensembl"/>
</dbReference>
<dbReference type="GO" id="GO:0000978">
    <property type="term" value="F:RNA polymerase II cis-regulatory region sequence-specific DNA binding"/>
    <property type="evidence" value="ECO:0007669"/>
    <property type="project" value="Ensembl"/>
</dbReference>
<dbReference type="GO" id="GO:0043565">
    <property type="term" value="F:sequence-specific DNA binding"/>
    <property type="evidence" value="ECO:0000250"/>
    <property type="project" value="UniProtKB"/>
</dbReference>
<dbReference type="GO" id="GO:0008270">
    <property type="term" value="F:zinc ion binding"/>
    <property type="evidence" value="ECO:0007669"/>
    <property type="project" value="UniProtKB-KW"/>
</dbReference>
<dbReference type="GO" id="GO:0045892">
    <property type="term" value="P:negative regulation of DNA-templated transcription"/>
    <property type="evidence" value="ECO:0000250"/>
    <property type="project" value="UniProtKB"/>
</dbReference>
<dbReference type="GO" id="GO:0007175">
    <property type="term" value="P:negative regulation of epidermal growth factor-activated receptor activity"/>
    <property type="evidence" value="ECO:0000250"/>
    <property type="project" value="UniProtKB"/>
</dbReference>
<dbReference type="CDD" id="cd20384">
    <property type="entry name" value="Tudor_ZGPAT"/>
    <property type="match status" value="1"/>
</dbReference>
<dbReference type="FunFam" id="2.30.30.140:FF:000071">
    <property type="entry name" value="Zinc finger CCCH-type with G patch domain-containing protein"/>
    <property type="match status" value="1"/>
</dbReference>
<dbReference type="FunFam" id="2.30.30.1190:FF:000001">
    <property type="entry name" value="zinc finger CCCH-type with G patch domain-containing protein"/>
    <property type="match status" value="1"/>
</dbReference>
<dbReference type="Gene3D" id="2.30.30.1190">
    <property type="match status" value="1"/>
</dbReference>
<dbReference type="Gene3D" id="2.30.30.140">
    <property type="match status" value="1"/>
</dbReference>
<dbReference type="InterPro" id="IPR000467">
    <property type="entry name" value="G_patch_dom"/>
</dbReference>
<dbReference type="InterPro" id="IPR041367">
    <property type="entry name" value="Znf-CCCH_4"/>
</dbReference>
<dbReference type="InterPro" id="IPR000571">
    <property type="entry name" value="Znf_CCCH"/>
</dbReference>
<dbReference type="InterPro" id="IPR036855">
    <property type="entry name" value="Znf_CCCH_sf"/>
</dbReference>
<dbReference type="PANTHER" id="PTHR46297">
    <property type="entry name" value="ZINC FINGER CCCH-TYPE WITH G PATCH DOMAIN-CONTAINING PROTEIN"/>
    <property type="match status" value="1"/>
</dbReference>
<dbReference type="PANTHER" id="PTHR46297:SF1">
    <property type="entry name" value="ZINC FINGER CCCH-TYPE WITH G PATCH DOMAIN-CONTAINING PROTEIN"/>
    <property type="match status" value="1"/>
</dbReference>
<dbReference type="Pfam" id="PF01585">
    <property type="entry name" value="G-patch"/>
    <property type="match status" value="1"/>
</dbReference>
<dbReference type="Pfam" id="PF18044">
    <property type="entry name" value="zf-CCCH_4"/>
    <property type="match status" value="1"/>
</dbReference>
<dbReference type="SMART" id="SM00443">
    <property type="entry name" value="G_patch"/>
    <property type="match status" value="1"/>
</dbReference>
<dbReference type="SMART" id="SM00356">
    <property type="entry name" value="ZnF_C3H1"/>
    <property type="match status" value="1"/>
</dbReference>
<dbReference type="SUPFAM" id="SSF90229">
    <property type="entry name" value="CCCH zinc finger"/>
    <property type="match status" value="1"/>
</dbReference>
<dbReference type="SUPFAM" id="SSF63748">
    <property type="entry name" value="Tudor/PWWP/MBT"/>
    <property type="match status" value="1"/>
</dbReference>
<dbReference type="PROSITE" id="PS50174">
    <property type="entry name" value="G_PATCH"/>
    <property type="match status" value="1"/>
</dbReference>
<dbReference type="PROSITE" id="PS50103">
    <property type="entry name" value="ZF_C3H1"/>
    <property type="match status" value="1"/>
</dbReference>
<comment type="function">
    <text evidence="1">Transcription repressor that specifically binds the 5'-GGAG[GA]A[GA]A-3' consensus sequence. Represses transcription by recruiting the chromatin multiprotein complex NuRD to target promoters. Negatively regulates expression of EGFR, a gene involved in cell proliferation, survival and migration. Its ability to repress genes of the EGFR pathway suggest it may act as a tumor suppressor (By similarity).</text>
</comment>
<comment type="subunit">
    <text evidence="1">Interacts with CHD4/Mi-2; the interaction is direct.</text>
</comment>
<comment type="subcellular location">
    <subcellularLocation>
        <location evidence="1">Nucleus</location>
    </subcellularLocation>
</comment>
<reference key="1">
    <citation type="submission" date="2009-04" db="EMBL/GenBank/DDBJ databases">
        <title>ZGPAT zinc finger, CCCH-type with G patch domain.</title>
        <authorList>
            <person name="Liu G.Y."/>
            <person name="Ge C.R."/>
        </authorList>
    </citation>
    <scope>NUCLEOTIDE SEQUENCE [MRNA]</scope>
</reference>
<organism>
    <name type="scientific">Ovis aries</name>
    <name type="common">Sheep</name>
    <dbReference type="NCBI Taxonomy" id="9940"/>
    <lineage>
        <taxon>Eukaryota</taxon>
        <taxon>Metazoa</taxon>
        <taxon>Chordata</taxon>
        <taxon>Craniata</taxon>
        <taxon>Vertebrata</taxon>
        <taxon>Euteleostomi</taxon>
        <taxon>Mammalia</taxon>
        <taxon>Eutheria</taxon>
        <taxon>Laurasiatheria</taxon>
        <taxon>Artiodactyla</taxon>
        <taxon>Ruminantia</taxon>
        <taxon>Pecora</taxon>
        <taxon>Bovidae</taxon>
        <taxon>Caprinae</taxon>
        <taxon>Ovis</taxon>
    </lineage>
</organism>
<feature type="chain" id="PRO_0000385192" description="Zinc finger CCCH-type with G patch domain-containing protein">
    <location>
        <begin position="1"/>
        <end position="513"/>
    </location>
</feature>
<feature type="domain" description="G-patch" evidence="4">
    <location>
        <begin position="315"/>
        <end position="361"/>
    </location>
</feature>
<feature type="zinc finger region" description="C3H1-type" evidence="5">
    <location>
        <begin position="176"/>
        <end position="202"/>
    </location>
</feature>
<feature type="region of interest" description="Disordered" evidence="6">
    <location>
        <begin position="92"/>
        <end position="131"/>
    </location>
</feature>
<feature type="region of interest" description="Disordered" evidence="6">
    <location>
        <begin position="267"/>
        <end position="298"/>
    </location>
</feature>
<feature type="region of interest" description="Disordered" evidence="6">
    <location>
        <begin position="367"/>
        <end position="394"/>
    </location>
</feature>
<feature type="region of interest" description="Disordered" evidence="6">
    <location>
        <begin position="493"/>
        <end position="513"/>
    </location>
</feature>
<feature type="compositionally biased region" description="Acidic residues" evidence="6">
    <location>
        <begin position="115"/>
        <end position="126"/>
    </location>
</feature>
<feature type="compositionally biased region" description="Basic and acidic residues" evidence="6">
    <location>
        <begin position="497"/>
        <end position="513"/>
    </location>
</feature>
<feature type="modified residue" description="N-acetylmethionine" evidence="2">
    <location>
        <position position="1"/>
    </location>
</feature>
<feature type="modified residue" description="Phosphoserine" evidence="3">
    <location>
        <position position="278"/>
    </location>
</feature>
<feature type="modified residue" description="Phosphoserine" evidence="3">
    <location>
        <position position="355"/>
    </location>
</feature>